<evidence type="ECO:0000255" key="1">
    <source>
        <dbReference type="HAMAP-Rule" id="MF_00774"/>
    </source>
</evidence>
<evidence type="ECO:0000305" key="2"/>
<protein>
    <recommendedName>
        <fullName evidence="1">Acyl transferase</fullName>
        <shortName evidence="1">ACT</shortName>
        <ecNumber evidence="1">2.3.1.-</ecNumber>
    </recommendedName>
    <alternativeName>
        <fullName evidence="1">C14ACP-TE</fullName>
    </alternativeName>
    <alternativeName>
        <fullName evidence="1">Myristoyl-ACP-specific thioesterase</fullName>
    </alternativeName>
</protein>
<keyword id="KW-0012">Acyltransferase</keyword>
<keyword id="KW-0455">Luminescence</keyword>
<keyword id="KW-0808">Transferase</keyword>
<proteinExistence type="inferred from homology"/>
<comment type="function">
    <text>Acyl transferase is part of the fatty acid reductase system required for aldehyde biosynthesis; it produces fatty acids for the luminescent reaction.</text>
</comment>
<comment type="pathway">
    <text evidence="1">Lipid metabolism; fatty acid reduction for biolumincescence.</text>
</comment>
<comment type="similarity">
    <text evidence="1">Belongs to the LuxD family.</text>
</comment>
<dbReference type="EC" id="2.3.1.-" evidence="1"/>
<dbReference type="EMBL" id="M63594">
    <property type="protein sequence ID" value="AAA25617.1"/>
    <property type="molecule type" value="Genomic_DNA"/>
</dbReference>
<dbReference type="EMBL" id="X08036">
    <property type="protein sequence ID" value="CAA30830.1"/>
    <property type="molecule type" value="Genomic_DNA"/>
</dbReference>
<dbReference type="PIR" id="PQ0049">
    <property type="entry name" value="PQ0049"/>
</dbReference>
<dbReference type="PIR" id="S17952">
    <property type="entry name" value="S17952"/>
</dbReference>
<dbReference type="RefSeq" id="WP_045065774.1">
    <property type="nucleotide sequence ID" value="NZ_CP131599.1"/>
</dbReference>
<dbReference type="SMR" id="P21309"/>
<dbReference type="ESTHER" id="phole-lxd1">
    <property type="family name" value="Thioesterase_acyl-transferase"/>
</dbReference>
<dbReference type="PATRIC" id="fig|553611.3.peg.3622"/>
<dbReference type="UniPathway" id="UPA00569"/>
<dbReference type="GO" id="GO:0016747">
    <property type="term" value="F:acyltransferase activity, transferring groups other than amino-acyl groups"/>
    <property type="evidence" value="ECO:0007669"/>
    <property type="project" value="UniProtKB-UniRule"/>
</dbReference>
<dbReference type="GO" id="GO:0008218">
    <property type="term" value="P:bioluminescence"/>
    <property type="evidence" value="ECO:0007669"/>
    <property type="project" value="UniProtKB-UniRule"/>
</dbReference>
<dbReference type="GO" id="GO:0006631">
    <property type="term" value="P:fatty acid metabolic process"/>
    <property type="evidence" value="ECO:0007669"/>
    <property type="project" value="InterPro"/>
</dbReference>
<dbReference type="Gene3D" id="3.40.50.1820">
    <property type="entry name" value="alpha/beta hydrolase"/>
    <property type="match status" value="1"/>
</dbReference>
<dbReference type="HAMAP" id="MF_00774">
    <property type="entry name" value="LuxD"/>
    <property type="match status" value="1"/>
</dbReference>
<dbReference type="InterPro" id="IPR029058">
    <property type="entry name" value="AB_hydrolase_fold"/>
</dbReference>
<dbReference type="InterPro" id="IPR003157">
    <property type="entry name" value="LuxD"/>
</dbReference>
<dbReference type="Pfam" id="PF02273">
    <property type="entry name" value="Acyl_transf_2"/>
    <property type="match status" value="1"/>
</dbReference>
<dbReference type="PIRSF" id="PIRSF009416">
    <property type="entry name" value="LuxD"/>
    <property type="match status" value="1"/>
</dbReference>
<dbReference type="SUPFAM" id="SSF53474">
    <property type="entry name" value="alpha/beta-Hydrolases"/>
    <property type="match status" value="1"/>
</dbReference>
<gene>
    <name evidence="1" type="primary">luxD</name>
</gene>
<name>LUXD1_PHOLE</name>
<feature type="chain" id="PRO_0000220187" description="Acyl transferase">
    <location>
        <begin position="1"/>
        <end position="315"/>
    </location>
</feature>
<feature type="active site" description="Charge relay system" evidence="1">
    <location>
        <position position="116"/>
    </location>
</feature>
<feature type="active site" description="Charge relay system" evidence="1">
    <location>
        <position position="213"/>
    </location>
</feature>
<feature type="active site" description="Charge relay system" evidence="1">
    <location>
        <position position="243"/>
    </location>
</feature>
<feature type="sequence conflict" description="In Ref. 2; CAA30830." evidence="2" ref="2">
    <original>K</original>
    <variation>R</variation>
    <location>
        <position position="261"/>
    </location>
</feature>
<feature type="sequence conflict" description="In Ref. 2." evidence="2" ref="2">
    <original>VS</original>
    <variation>IG</variation>
    <location>
        <begin position="264"/>
        <end position="265"/>
    </location>
</feature>
<feature type="sequence conflict" description="In Ref. 2." evidence="2" ref="2">
    <original>RQLVE</original>
    <variation>SEVID</variation>
    <location>
        <begin position="268"/>
        <end position="272"/>
    </location>
</feature>
<feature type="sequence conflict" description="In Ref. 2; CAA30830." evidence="2" ref="2">
    <original>EII</original>
    <variation>DIS</variation>
    <location>
        <begin position="276"/>
        <end position="278"/>
    </location>
</feature>
<feature type="sequence conflict" description="In Ref. 2; CAA30830." evidence="2" ref="2">
    <original>V</original>
    <variation>I</variation>
    <location>
        <position position="287"/>
    </location>
</feature>
<feature type="sequence conflict" description="In Ref. 2." evidence="2" ref="2">
    <original>IINRL</original>
    <variation>MFASA</variation>
    <location>
        <begin position="303"/>
        <end position="307"/>
    </location>
</feature>
<organism>
    <name type="scientific">Photobacterium leiognathi</name>
    <dbReference type="NCBI Taxonomy" id="553611"/>
    <lineage>
        <taxon>Bacteria</taxon>
        <taxon>Pseudomonadati</taxon>
        <taxon>Pseudomonadota</taxon>
        <taxon>Gammaproteobacteria</taxon>
        <taxon>Vibrionales</taxon>
        <taxon>Vibrionaceae</taxon>
        <taxon>Photobacterium</taxon>
    </lineage>
</organism>
<accession>P21309</accession>
<reference key="1">
    <citation type="journal article" date="1991" name="Eur. J. Biochem.">
        <title>The lux genes of the luminous bacterial symbiont, Photobacterium leiognathi, of the ponyfish. Nucleotide sequence, difference in gene organization, and high expression in mutant Escherichia coli.</title>
        <authorList>
            <person name="Lee C.Y."/>
            <person name="Szittner R.B."/>
            <person name="Meighen E.A."/>
        </authorList>
    </citation>
    <scope>NUCLEOTIDE SEQUENCE [GENOMIC DNA]</scope>
    <source>
        <strain>ATCC 25521 / DSM 21260 / CCUG 16229 / CIP 66.5 / NCIMB 2193 / L1</strain>
    </source>
</reference>
<reference key="2">
    <citation type="journal article" date="1990" name="Gene">
        <title>Isolation of bioluminescent functions from Photobacterium leiognathi: analysis of luxA, luxB, luxG and neighboring genes.</title>
        <authorList>
            <person name="Illarionov B.A."/>
            <person name="Blinov V.M."/>
            <person name="Donchenko A.P."/>
            <person name="Protopopova M.V."/>
            <person name="Karginov V.A."/>
            <person name="Mertvetsov N.P."/>
            <person name="Gitelson J.I."/>
        </authorList>
    </citation>
    <scope>NUCLEOTIDE SEQUENCE [GENOMIC DNA] OF 261-307</scope>
    <source>
        <strain>554</strain>
    </source>
</reference>
<sequence>MENTQHSLPIDHVIDIGDNRYIRVWETKPKNKETKRNNTIVIASGFARRMDHFAGLAEYLANNGFRVIRYDSLNHVGLSSGEIKQFSMSVGKHSLLTVIDWLKERNINNIGLIASSLSARIAYEVAAEIDLSFLITAVGVVNLRSTLEKALKYDYLQMEVNTIPEDLIFEGHNLGSKVFVTDCFENNWDSLDSTINKICELDIPFIAFTSDGDDWVCQHEVKHLVSNVKSDKKKIYSLVGSSHDLGENLVVLRNFYQSMTKAAVSLDRQLVELVDEIIEPNFEDLTVITVNERRLKNKIENEIINRLADRVLASV</sequence>